<dbReference type="EC" id="2.7.1.2" evidence="1"/>
<dbReference type="EMBL" id="AE000512">
    <property type="protein sequence ID" value="AAD36537.1"/>
    <property type="molecule type" value="Genomic_DNA"/>
</dbReference>
<dbReference type="PIR" id="F72246">
    <property type="entry name" value="F72246"/>
</dbReference>
<dbReference type="RefSeq" id="NP_229269.1">
    <property type="nucleotide sequence ID" value="NC_000853.1"/>
</dbReference>
<dbReference type="SMR" id="Q9X1I0"/>
<dbReference type="FunCoup" id="Q9X1I0">
    <property type="interactions" value="234"/>
</dbReference>
<dbReference type="STRING" id="243274.TM_1469"/>
<dbReference type="PaxDb" id="243274-THEMA_06955"/>
<dbReference type="EnsemblBacteria" id="AAD36537">
    <property type="protein sequence ID" value="AAD36537"/>
    <property type="gene ID" value="TM_1469"/>
</dbReference>
<dbReference type="KEGG" id="tma:TM1469"/>
<dbReference type="PATRIC" id="fig|243274.5.peg.1485"/>
<dbReference type="InParanoid" id="Q9X1I0"/>
<dbReference type="OrthoDB" id="9810372at2"/>
<dbReference type="BioCyc" id="MetaCyc:MONOMER-6111"/>
<dbReference type="Proteomes" id="UP000008183">
    <property type="component" value="Chromosome"/>
</dbReference>
<dbReference type="GO" id="GO:0005737">
    <property type="term" value="C:cytoplasm"/>
    <property type="evidence" value="ECO:0007669"/>
    <property type="project" value="InterPro"/>
</dbReference>
<dbReference type="GO" id="GO:0005524">
    <property type="term" value="F:ATP binding"/>
    <property type="evidence" value="ECO:0007669"/>
    <property type="project" value="UniProtKB-KW"/>
</dbReference>
<dbReference type="GO" id="GO:0004340">
    <property type="term" value="F:glucokinase activity"/>
    <property type="evidence" value="ECO:0007669"/>
    <property type="project" value="UniProtKB-EC"/>
</dbReference>
<dbReference type="GO" id="GO:0006006">
    <property type="term" value="P:glucose metabolic process"/>
    <property type="evidence" value="ECO:0007669"/>
    <property type="project" value="UniProtKB-KW"/>
</dbReference>
<dbReference type="GO" id="GO:0006096">
    <property type="term" value="P:glycolytic process"/>
    <property type="evidence" value="ECO:0007669"/>
    <property type="project" value="InterPro"/>
</dbReference>
<dbReference type="CDD" id="cd24064">
    <property type="entry name" value="ASKHA_NBD_ROK_TmGLK-like"/>
    <property type="match status" value="1"/>
</dbReference>
<dbReference type="Gene3D" id="3.30.420.40">
    <property type="match status" value="2"/>
</dbReference>
<dbReference type="InterPro" id="IPR043129">
    <property type="entry name" value="ATPase_NBD"/>
</dbReference>
<dbReference type="InterPro" id="IPR000600">
    <property type="entry name" value="ROK"/>
</dbReference>
<dbReference type="InterPro" id="IPR049874">
    <property type="entry name" value="ROK_cs"/>
</dbReference>
<dbReference type="InterPro" id="IPR004654">
    <property type="entry name" value="ROK_glcA"/>
</dbReference>
<dbReference type="NCBIfam" id="TIGR00744">
    <property type="entry name" value="ROK_glcA_fam"/>
    <property type="match status" value="1"/>
</dbReference>
<dbReference type="PANTHER" id="PTHR18964:SF149">
    <property type="entry name" value="BIFUNCTIONAL UDP-N-ACETYLGLUCOSAMINE 2-EPIMERASE_N-ACETYLMANNOSAMINE KINASE"/>
    <property type="match status" value="1"/>
</dbReference>
<dbReference type="PANTHER" id="PTHR18964">
    <property type="entry name" value="ROK (REPRESSOR, ORF, KINASE) FAMILY"/>
    <property type="match status" value="1"/>
</dbReference>
<dbReference type="Pfam" id="PF00480">
    <property type="entry name" value="ROK"/>
    <property type="match status" value="1"/>
</dbReference>
<dbReference type="SUPFAM" id="SSF53067">
    <property type="entry name" value="Actin-like ATPase domain"/>
    <property type="match status" value="1"/>
</dbReference>
<dbReference type="PROSITE" id="PS01125">
    <property type="entry name" value="ROK"/>
    <property type="match status" value="1"/>
</dbReference>
<comment type="function">
    <text evidence="1">Catalyzes the phosphorylation of D-glucose to D-glucose 6-phosphate using ATP as the phosphate donor. Can also phosphorylate 2-deoxyglucose, with lower efficiency. ITP can also serve as a phosphoryl donor.</text>
</comment>
<comment type="catalytic activity">
    <reaction evidence="1">
        <text>D-glucose + ATP = D-glucose 6-phosphate + ADP + H(+)</text>
        <dbReference type="Rhea" id="RHEA:17825"/>
        <dbReference type="ChEBI" id="CHEBI:4167"/>
        <dbReference type="ChEBI" id="CHEBI:15378"/>
        <dbReference type="ChEBI" id="CHEBI:30616"/>
        <dbReference type="ChEBI" id="CHEBI:61548"/>
        <dbReference type="ChEBI" id="CHEBI:456216"/>
        <dbReference type="EC" id="2.7.1.2"/>
    </reaction>
</comment>
<comment type="cofactor">
    <cofactor evidence="1">
        <name>a divalent metal cation</name>
        <dbReference type="ChEBI" id="CHEBI:60240"/>
    </cofactor>
    <text evidence="1">Mg(2+) is the most effective ion. It can be efficiently replaced with Mn(2+) or Co(2+) and to some extent with Ni(2+).</text>
</comment>
<comment type="biophysicochemical properties">
    <kinetics>
        <KM evidence="1">1 mM for glucose</KM>
        <KM evidence="1">1.1 mM for 2-deoxyglucose</KM>
        <KM evidence="1">0.36 mM for ATP</KM>
    </kinetics>
    <phDependence>
        <text evidence="1">Optimum pH is 7.3.</text>
    </phDependence>
    <temperatureDependence>
        <text evidence="1">Optimum temperature is 93 degrees Celsius.</text>
    </temperatureDependence>
</comment>
<comment type="subunit">
    <text evidence="1">Homodimer.</text>
</comment>
<comment type="similarity">
    <text evidence="3">Belongs to the ROK (NagC/XylR) family.</text>
</comment>
<feature type="chain" id="PRO_0000448972" description="Glucokinase">
    <location>
        <begin position="1"/>
        <end position="317"/>
    </location>
</feature>
<keyword id="KW-0067">ATP-binding</keyword>
<keyword id="KW-0119">Carbohydrate metabolism</keyword>
<keyword id="KW-0313">Glucose metabolism</keyword>
<keyword id="KW-0418">Kinase</keyword>
<keyword id="KW-0460">Magnesium</keyword>
<keyword id="KW-0547">Nucleotide-binding</keyword>
<keyword id="KW-1185">Reference proteome</keyword>
<keyword id="KW-0808">Transferase</keyword>
<sequence>MPKLKLIGVDLGGTTFSVGLVSEDGKILKKVTRDTLVENGKEDVIRRIAETILEVSDGEEAPYVGIGSPGSIDRENGIVRFSPNFPDWHNVPLTDELAKRTGKKVFLENDANAFVLGEKWFGAGRGHDHIVALTLGTGIGGGVVTHGYLLTGRDGIGAELGHVVVEPNGPMCNCGTRGCLEAVASATAIRRFLREGYKKYHSSLVYKLAGSPEKADAKHLFDAARQGDRFALMIRDRVVDALARAVAGYIHIFNPEIVIIGGGISRAGEILFGPLREKVVDYIMPSFVGTYEVVASPLVEDAGILGAASIIKERIGG</sequence>
<accession>Q9X1I0</accession>
<gene>
    <name evidence="2" type="primary">glk</name>
    <name evidence="4" type="ordered locus">TM_1469</name>
</gene>
<reference key="1">
    <citation type="journal article" date="1999" name="Nature">
        <title>Evidence for lateral gene transfer between Archaea and Bacteria from genome sequence of Thermotoga maritima.</title>
        <authorList>
            <person name="Nelson K.E."/>
            <person name="Clayton R.A."/>
            <person name="Gill S.R."/>
            <person name="Gwinn M.L."/>
            <person name="Dodson R.J."/>
            <person name="Haft D.H."/>
            <person name="Hickey E.K."/>
            <person name="Peterson J.D."/>
            <person name="Nelson W.C."/>
            <person name="Ketchum K.A."/>
            <person name="McDonald L.A."/>
            <person name="Utterback T.R."/>
            <person name="Malek J.A."/>
            <person name="Linher K.D."/>
            <person name="Garrett M.M."/>
            <person name="Stewart A.M."/>
            <person name="Cotton M.D."/>
            <person name="Pratt M.S."/>
            <person name="Phillips C.A."/>
            <person name="Richardson D.L."/>
            <person name="Heidelberg J.F."/>
            <person name="Sutton G.G."/>
            <person name="Fleischmann R.D."/>
            <person name="Eisen J.A."/>
            <person name="White O."/>
            <person name="Salzberg S.L."/>
            <person name="Smith H.O."/>
            <person name="Venter J.C."/>
            <person name="Fraser C.M."/>
        </authorList>
    </citation>
    <scope>NUCLEOTIDE SEQUENCE [LARGE SCALE GENOMIC DNA]</scope>
    <source>
        <strain>ATCC 43589 / DSM 3109 / JCM 10099 / NBRC 100826 / MSB8</strain>
    </source>
</reference>
<reference key="2">
    <citation type="journal article" date="2003" name="FEMS Microbiol. Lett.">
        <title>ATP-dependent glucokinase from the hyperthermophilic bacterium Thermotoga maritima represents an extremely thermophilic ROK glucokinase with high substrate specificity.</title>
        <authorList>
            <person name="Hansen T."/>
            <person name="Schoenheit P."/>
        </authorList>
    </citation>
    <scope>FUNCTION</scope>
    <scope>CATALYTIC ACTIVITY</scope>
    <scope>COFACTOR</scope>
    <scope>BIOPHYSICOCHEMICAL PROPERTIES</scope>
    <scope>SUBUNIT</scope>
</reference>
<name>GLK_THEMA</name>
<organism>
    <name type="scientific">Thermotoga maritima (strain ATCC 43589 / DSM 3109 / JCM 10099 / NBRC 100826 / MSB8)</name>
    <dbReference type="NCBI Taxonomy" id="243274"/>
    <lineage>
        <taxon>Bacteria</taxon>
        <taxon>Thermotogati</taxon>
        <taxon>Thermotogota</taxon>
        <taxon>Thermotogae</taxon>
        <taxon>Thermotogales</taxon>
        <taxon>Thermotogaceae</taxon>
        <taxon>Thermotoga</taxon>
    </lineage>
</organism>
<protein>
    <recommendedName>
        <fullName evidence="3">Glucokinase</fullName>
        <ecNumber evidence="1">2.7.1.2</ecNumber>
    </recommendedName>
    <alternativeName>
        <fullName evidence="2">ATP-dependent glucokinase</fullName>
        <shortName evidence="2">ATP-GLK</shortName>
    </alternativeName>
    <alternativeName>
        <fullName evidence="3">Glucose kinase</fullName>
    </alternativeName>
</protein>
<evidence type="ECO:0000269" key="1">
    <source>
    </source>
</evidence>
<evidence type="ECO:0000303" key="2">
    <source>
    </source>
</evidence>
<evidence type="ECO:0000305" key="3"/>
<evidence type="ECO:0000312" key="4">
    <source>
        <dbReference type="EMBL" id="AAD36537.1"/>
    </source>
</evidence>
<proteinExistence type="evidence at protein level"/>